<feature type="chain" id="PRO_0000259953" description="Accessory protein p12I">
    <location>
        <begin position="1"/>
        <end position="99"/>
    </location>
</feature>
<feature type="transmembrane region" description="Helical" evidence="2">
    <location>
        <begin position="3"/>
        <end position="23"/>
    </location>
</feature>
<feature type="transmembrane region" description="Helical" evidence="2">
    <location>
        <begin position="48"/>
        <end position="68"/>
    </location>
</feature>
<feature type="short sequence motif" description="SH3-binding" evidence="2">
    <location>
        <begin position="4"/>
        <end position="11"/>
    </location>
</feature>
<feature type="short sequence motif" description="SH3-binding" evidence="2">
    <location>
        <begin position="33"/>
        <end position="38"/>
    </location>
</feature>
<feature type="short sequence motif" description="SH3-binding" evidence="2">
    <location>
        <begin position="70"/>
        <end position="77"/>
    </location>
</feature>
<feature type="short sequence motif" description="SH3-binding" evidence="2">
    <location>
        <begin position="88"/>
        <end position="93"/>
    </location>
</feature>
<feature type="cross-link" description="Glycyl lysine isopeptide (Lys-Gly) (interchain with G-Cter in ubiquitin); in isolate LAF" evidence="3">
    <location>
        <position position="88"/>
    </location>
</feature>
<feature type="splice variant" id="VSP_021562" description="In isoform p27I." evidence="9">
    <original>M</original>
    <variation>MPKTRRRPRRSQRKRPPTPWQLPPFSLQGLHLAFQLSSIAINPQLLHFFFPST</variation>
    <location>
        <position position="1"/>
    </location>
</feature>
<feature type="sequence variant" description="In strain: Isolate LAF.">
    <original>PPS</original>
    <variation>SPG</variation>
    <location>
        <begin position="23"/>
        <end position="25"/>
    </location>
</feature>
<feature type="sequence variant" description="In strain: Isolate LAF.">
    <original>G</original>
    <variation>N</variation>
    <location>
        <position position="51"/>
    </location>
</feature>
<feature type="sequence variant" description="In strain: Isolate LAF.">
    <original>I</original>
    <variation>L</variation>
    <location>
        <position position="74"/>
    </location>
</feature>
<feature type="sequence variant" description="In strain: Isolate ATK-1.">
    <original>K</original>
    <variation>R</variation>
    <location>
        <position position="88"/>
    </location>
</feature>
<feature type="mutagenesis site" description="Increases the steady state of p12I." evidence="3">
    <original>K</original>
    <variation>R</variation>
    <location>
        <position position="88"/>
    </location>
</feature>
<comment type="function">
    <text evidence="1 4 6">p12I is a modulator of T-lymphocyte proliferation and immune function and may contribute to establish a persistent infection. Binds and down-modulates cell surface expression of interleukin-2 receptors IL2RB and IL2RG. Also down-modulates cell surface MHC-I molecules by binding to free immature MHC-I heavy chains in the ER and targeting them to the proteasome for degradation. Binding to IL2RB mediates recruitment of JAK1 and JAK3. As a result of this interaction, p12I increases DNA-binding and transcriptional activity of STAT5 (By similarity).</text>
</comment>
<comment type="subunit">
    <text evidence="3 4 5 7 8">p12I is a homodimer. Interacts with human CANX, CALR, ATP6V0C, IL2RB, IL2RG. Binds to MHC-I heavy chains HLA-A2, HLA-B7 and HLA-Cw4.</text>
</comment>
<comment type="subcellular location">
    <molecule>Isoform p12I</molecule>
    <subcellularLocation>
        <location>Host endoplasmic reticulum membrane</location>
        <topology>Multi-pass membrane protein</topology>
    </subcellularLocation>
    <subcellularLocation>
        <location evidence="10">Host Golgi apparatus</location>
        <location evidence="10">Host cis-Golgi network membrane</location>
        <topology evidence="10">Multi-pass membrane protein</topology>
    </subcellularLocation>
</comment>
<comment type="alternative products">
    <event type="alternative splicing"/>
    <isoform>
        <id>P0C215-1</id>
        <name>p12I</name>
        <sequence type="displayed"/>
    </isoform>
    <isoform>
        <id>P0C215-2</id>
        <name>p27I</name>
        <sequence type="described" ref="VSP_021562"/>
    </isoform>
</comment>
<comment type="PTM">
    <text evidence="3">Ubiquitinated; a fraction of P12I is degraded via the ubiquitin system.</text>
</comment>
<comment type="miscellaneous">
    <text>Lys-88 seems to be associated with tropical spastic paraparesis/HTLV-1-associated myelopathy (TSP/HAM).</text>
</comment>
<comment type="miscellaneous">
    <text>HTLV-1 lineages are divided in four clades, A (Cosmopolitan), B (Central African group), C (Melanesian group) and D (New Central African group).</text>
</comment>
<comment type="similarity">
    <text evidence="10">Belongs to the HTLV-1 accessory protein p12I family.</text>
</comment>
<sequence>MLFRLLSPLSPLALTALLLFLLPPSDVSGLLLRPPPAPCLLLFLPFQILSGLLFLLFLPLFFSLPLLLSPSLPITMRFPARWRFLPWKAPSQPAAAFLF</sequence>
<accession>P0C215</accession>
<proteinExistence type="evidence at protein level"/>
<dbReference type="EMBL" id="J02029">
    <property type="status" value="NOT_ANNOTATED_CDS"/>
    <property type="molecule type" value="Genomic_DNA"/>
</dbReference>
<dbReference type="EMBL" id="L08432">
    <property type="status" value="NOT_ANNOTATED_CDS"/>
    <property type="molecule type" value="mRNA"/>
</dbReference>
<dbReference type="iPTMnet" id="P0C215"/>
<dbReference type="KEGG" id="ag:P0C215"/>
<dbReference type="Proteomes" id="UP000007683">
    <property type="component" value="Segment"/>
</dbReference>
<dbReference type="GO" id="GO:0044167">
    <property type="term" value="C:host cell endoplasmic reticulum membrane"/>
    <property type="evidence" value="ECO:0007669"/>
    <property type="project" value="UniProtKB-SubCell"/>
</dbReference>
<dbReference type="GO" id="GO:0044177">
    <property type="term" value="C:host cell Golgi apparatus"/>
    <property type="evidence" value="ECO:0007669"/>
    <property type="project" value="UniProtKB-SubCell"/>
</dbReference>
<dbReference type="GO" id="GO:0016020">
    <property type="term" value="C:membrane"/>
    <property type="evidence" value="ECO:0007669"/>
    <property type="project" value="UniProtKB-KW"/>
</dbReference>
<dbReference type="GO" id="GO:0017124">
    <property type="term" value="F:SH3 domain binding"/>
    <property type="evidence" value="ECO:0007669"/>
    <property type="project" value="UniProtKB-KW"/>
</dbReference>
<dbReference type="GO" id="GO:0046776">
    <property type="term" value="P:symbiont-mediated suppression of host antigen processing and presentation of peptide antigen via MHC class I"/>
    <property type="evidence" value="ECO:0007669"/>
    <property type="project" value="UniProtKB-KW"/>
</dbReference>
<dbReference type="InterPro" id="IPR021086">
    <property type="entry name" value="p12I"/>
</dbReference>
<dbReference type="Pfam" id="PF12233">
    <property type="entry name" value="p12I"/>
    <property type="match status" value="1"/>
</dbReference>
<organismHost>
    <name type="scientific">Homo sapiens</name>
    <name type="common">Human</name>
    <dbReference type="NCBI Taxonomy" id="9606"/>
</organismHost>
<keyword id="KW-0025">Alternative splicing</keyword>
<keyword id="KW-1125">Evasion of host immunity by viral interleukin-like protein</keyword>
<keyword id="KW-1038">Host endoplasmic reticulum</keyword>
<keyword id="KW-1040">Host Golgi apparatus</keyword>
<keyword id="KW-1043">Host membrane</keyword>
<keyword id="KW-0945">Host-virus interaction</keyword>
<keyword id="KW-1080">Inhibition of host adaptive immune response by virus</keyword>
<keyword id="KW-1115">Inhibition of host MHC class I molecule presentation by virus</keyword>
<keyword id="KW-1017">Isopeptide bond</keyword>
<keyword id="KW-0472">Membrane</keyword>
<keyword id="KW-1185">Reference proteome</keyword>
<keyword id="KW-0729">SH3-binding</keyword>
<keyword id="KW-0812">Transmembrane</keyword>
<keyword id="KW-1133">Transmembrane helix</keyword>
<keyword id="KW-0832">Ubl conjugation</keyword>
<keyword id="KW-0899">Viral immunoevasion</keyword>
<organism>
    <name type="scientific">Human T-cell leukemia virus 1 (strain Japan ATK-1 subtype A)</name>
    <name type="common">HTLV-1</name>
    <dbReference type="NCBI Taxonomy" id="11926"/>
    <lineage>
        <taxon>Viruses</taxon>
        <taxon>Riboviria</taxon>
        <taxon>Pararnavirae</taxon>
        <taxon>Artverviricota</taxon>
        <taxon>Revtraviricetes</taxon>
        <taxon>Ortervirales</taxon>
        <taxon>Retroviridae</taxon>
        <taxon>Orthoretrovirinae</taxon>
        <taxon>Deltaretrovirus</taxon>
        <taxon>Primate T-lymphotropic virus 1</taxon>
    </lineage>
</organism>
<reference key="1">
    <citation type="journal article" date="1983" name="Proc. Natl. Acad. Sci. U.S.A.">
        <title>Human adult T-cell leukemia virus: complete nucleotide sequence of the provirus genome integrated in leukemia cell DNA.</title>
        <authorList>
            <person name="Seiki M."/>
            <person name="Hattori S."/>
            <person name="Hirayama Y."/>
            <person name="Yoshida M.C."/>
        </authorList>
    </citation>
    <scope>NUCLEOTIDE SEQUENCE [GENOMIC DNA]</scope>
</reference>
<reference key="2">
    <citation type="journal article" date="1993" name="J. Virol.">
        <title>The p12I, p13II, and p30II proteins encoded by human T-cell leukemia/lymphotropic virus type I open reading frames I and II are localized in three different cellular compartments.</title>
        <authorList>
            <person name="Koralnik I.J."/>
            <person name="Fullen J."/>
            <person name="Franchini G."/>
        </authorList>
    </citation>
    <scope>NUCLEOTIDE SEQUENCE [MRNA] (ISOFORMS P27I AND P12I)</scope>
    <scope>SUBCELLULAR LOCATION OF P12I</scope>
</reference>
<reference key="3">
    <citation type="journal article" date="1992" name="Proc. Natl. Acad. Sci. U.S.A.">
        <title>Protein isoforms encoded by the pX region of human T-cell leukemia/lymphotropic virus type I.</title>
        <authorList>
            <person name="Koralnik I.J."/>
            <person name="Gessain A."/>
            <person name="Klotman M.E."/>
            <person name="Lo Monico A."/>
            <person name="Berneman Z.N."/>
            <person name="Franchini G."/>
        </authorList>
    </citation>
    <scope>ALTERNATIVE SPLICING (ISOFORMS P27I AND P12I)</scope>
    <source>
        <strain>Isolate LAF</strain>
    </source>
</reference>
<reference key="4">
    <citation type="journal article" date="1999" name="J. Virol.">
        <title>A lysine-to-arginine change found in natural alleles of the human T-cell lymphotropic/leukemia virus type 1 p12(I) protein greatly influences its stability.</title>
        <authorList>
            <person name="Trovato R."/>
            <person name="Mulloy J.C."/>
            <person name="Johnson J.M."/>
            <person name="Takemoto S."/>
            <person name="de Oliveira M.P."/>
            <person name="Franchini G."/>
        </authorList>
    </citation>
    <scope>SUBUNIT</scope>
    <scope>UBIQUITINATION</scope>
    <scope>MUTAGENESIS OF LYS-88</scope>
    <source>
        <strain>Isolate LAF</strain>
    </source>
</reference>
<reference key="5">
    <citation type="journal article" date="1995" name="J. Gen. Virol.">
        <title>Mapping of the intermolecular association of human T cell leukaemia/lymphotropic virus type I p12I and the vacuolar H+-ATPase 16 kDa subunit protein.</title>
        <authorList>
            <person name="Koralnik I.J."/>
            <person name="Mulloy J.C."/>
            <person name="Andresson T."/>
            <person name="Fullen J."/>
            <person name="Franchini G."/>
        </authorList>
    </citation>
    <scope>INTERACTION OF P12I WITH HUMAN ATP6V0C</scope>
    <source>
        <strain>Isolate LAF</strain>
    </source>
</reference>
<reference key="6">
    <citation type="journal article" date="1996" name="J. Virol.">
        <title>The human T-cell leukemia/lymphotropic virus type 1 p12I proteins bind the interleukin-2 receptor beta and gammac chains and affects their expression on the cell surface.</title>
        <authorList>
            <person name="Mulloy J.C."/>
            <person name="Crownley R.W."/>
            <person name="Fullen J."/>
            <person name="Leonard W.J."/>
            <person name="Franchini G."/>
        </authorList>
    </citation>
    <scope>INTERACTION WITH HUMAN IL2RB AND IL2RG</scope>
    <source>
        <strain>Isolate LAF</strain>
    </source>
</reference>
<reference key="7">
    <citation type="journal article" date="2001" name="J. Virol.">
        <title>Endoplasmic reticulum and cis-Golgi localization of human T-lymphotropic virus type 1 p12(I): association with calreticulin and calnexin.</title>
        <authorList>
            <person name="Ding W."/>
            <person name="Albrecht B."/>
            <person name="Luo R."/>
            <person name="Zhang W."/>
            <person name="Stanley J.R."/>
            <person name="Newbound G.C."/>
            <person name="Lairmore M.D."/>
        </authorList>
    </citation>
    <scope>SUBCELLULAR LOCATION OF P12I</scope>
    <scope>INTERACTION OF P12I WITH HUMAN CANX AND CALR</scope>
</reference>
<reference key="8">
    <citation type="journal article" date="2001" name="Blood">
        <title>HTLV-1 p12(I) protein enhances STAT5 activation and decreases the interleukin-2 requirement for proliferation of primary human peripheral blood mononuclear cells.</title>
        <authorList>
            <person name="Nicot C."/>
            <person name="Mulloy J.C."/>
            <person name="Ferrari M.G."/>
            <person name="Johnson J.M."/>
            <person name="Fu K."/>
            <person name="Fukumoto R."/>
            <person name="Trovato R."/>
            <person name="Fullen J."/>
            <person name="Leonard W.J."/>
            <person name="Franchini G."/>
        </authorList>
    </citation>
    <scope>FUNCTION</scope>
</reference>
<reference key="9">
    <citation type="journal article" date="2001" name="J. Virol.">
        <title>Free major histocompatibility complex class I heavy chain is preferentially targeted for degradation by human T-cell leukemia/lymphotropic virus type 1 p12(I) protein.</title>
        <authorList>
            <person name="Johnson J.M."/>
            <person name="Nicot C."/>
            <person name="Fullen J."/>
            <person name="Ciminale V."/>
            <person name="Casareto L."/>
            <person name="Mulloy J.C."/>
            <person name="Jacobson S."/>
            <person name="Franchini G."/>
        </authorList>
    </citation>
    <scope>FUNCTION</scope>
    <scope>INTERACTION WITH MHC-I HLA-A2; HLA-B7 AND HLA-CW4</scope>
    <source>
        <strain>Isolate LAF</strain>
    </source>
</reference>
<reference key="10">
    <citation type="journal article" date="2005" name="Oncogene">
        <title>Human T-cell leukemia/lymphoma virus type 1 nonstructural genes and their functions.</title>
        <authorList>
            <person name="Nicot C."/>
            <person name="Harrod R.L."/>
            <person name="Ciminale V."/>
            <person name="Franchini G."/>
        </authorList>
    </citation>
    <scope>REVIEW</scope>
</reference>
<protein>
    <recommendedName>
        <fullName>Accessory protein p12I</fullName>
    </recommendedName>
</protein>
<name>P12I_HTL1A</name>
<evidence type="ECO:0000250" key="1"/>
<evidence type="ECO:0000255" key="2"/>
<evidence type="ECO:0000269" key="3">
    <source>
    </source>
</evidence>
<evidence type="ECO:0000269" key="4">
    <source>
    </source>
</evidence>
<evidence type="ECO:0000269" key="5">
    <source>
    </source>
</evidence>
<evidence type="ECO:0000269" key="6">
    <source>
    </source>
</evidence>
<evidence type="ECO:0000269" key="7">
    <source>
    </source>
</evidence>
<evidence type="ECO:0000269" key="8">
    <source>
    </source>
</evidence>
<evidence type="ECO:0000303" key="9">
    <source>
    </source>
</evidence>
<evidence type="ECO:0000305" key="10"/>